<name>LECG_BOTIN</name>
<organism>
    <name type="scientific">Bothrops insularis</name>
    <name type="common">Golden lancehead</name>
    <name type="synonym">Lachesis insularis</name>
    <dbReference type="NCBI Taxonomy" id="8723"/>
    <lineage>
        <taxon>Eukaryota</taxon>
        <taxon>Metazoa</taxon>
        <taxon>Chordata</taxon>
        <taxon>Craniata</taxon>
        <taxon>Vertebrata</taxon>
        <taxon>Euteleostomi</taxon>
        <taxon>Lepidosauria</taxon>
        <taxon>Squamata</taxon>
        <taxon>Bifurcata</taxon>
        <taxon>Unidentata</taxon>
        <taxon>Episquamata</taxon>
        <taxon>Toxicofera</taxon>
        <taxon>Serpentes</taxon>
        <taxon>Colubroidea</taxon>
        <taxon>Viperidae</taxon>
        <taxon>Crotalinae</taxon>
        <taxon>Bothrops</taxon>
    </lineage>
</organism>
<evidence type="ECO:0000250" key="1">
    <source>
        <dbReference type="UniProtKB" id="P21963"/>
    </source>
</evidence>
<evidence type="ECO:0000250" key="2">
    <source>
        <dbReference type="UniProtKB" id="P83519"/>
    </source>
</evidence>
<evidence type="ECO:0000255" key="3">
    <source>
        <dbReference type="PROSITE-ProRule" id="PRU00040"/>
    </source>
</evidence>
<evidence type="ECO:0000269" key="4">
    <source>
    </source>
</evidence>
<evidence type="ECO:0000269" key="5">
    <source>
    </source>
</evidence>
<evidence type="ECO:0000303" key="6">
    <source>
    </source>
</evidence>
<evidence type="ECO:0000303" key="7">
    <source>
    </source>
</evidence>
<evidence type="ECO:0000305" key="8"/>
<evidence type="ECO:0000305" key="9">
    <source>
    </source>
</evidence>
<feature type="signal peptide" evidence="4">
    <location>
        <begin position="1"/>
        <end position="23"/>
    </location>
</feature>
<feature type="chain" id="PRO_0000355252" description="C-type lectin BiL" evidence="9">
    <location>
        <begin position="24"/>
        <end position="158"/>
    </location>
</feature>
<feature type="domain" description="C-type lectin" evidence="3">
    <location>
        <begin position="33"/>
        <end position="155"/>
    </location>
</feature>
<feature type="short sequence motif" description="Galactose-binding" evidence="1">
    <location>
        <begin position="119"/>
        <end position="121"/>
    </location>
</feature>
<feature type="binding site" evidence="2">
    <location>
        <position position="119"/>
    </location>
    <ligand>
        <name>Ca(2+)</name>
        <dbReference type="ChEBI" id="CHEBI:29108"/>
    </ligand>
</feature>
<feature type="binding site" evidence="2">
    <location>
        <position position="121"/>
    </location>
    <ligand>
        <name>Ca(2+)</name>
        <dbReference type="ChEBI" id="CHEBI:29108"/>
    </ligand>
</feature>
<feature type="binding site" evidence="2">
    <location>
        <position position="127"/>
    </location>
    <ligand>
        <name>Ca(2+)</name>
        <dbReference type="ChEBI" id="CHEBI:29108"/>
    </ligand>
</feature>
<feature type="binding site" evidence="2">
    <location>
        <position position="142"/>
    </location>
    <ligand>
        <name>Ca(2+)</name>
        <dbReference type="ChEBI" id="CHEBI:29108"/>
    </ligand>
</feature>
<feature type="binding site" evidence="2">
    <location>
        <position position="143"/>
    </location>
    <ligand>
        <name>Ca(2+)</name>
        <dbReference type="ChEBI" id="CHEBI:29108"/>
    </ligand>
</feature>
<feature type="disulfide bond" evidence="2">
    <location>
        <begin position="26"/>
        <end position="37"/>
    </location>
</feature>
<feature type="disulfide bond" evidence="2">
    <location>
        <begin position="54"/>
        <end position="154"/>
    </location>
</feature>
<feature type="disulfide bond" evidence="2">
    <location>
        <begin position="61"/>
        <end position="156"/>
    </location>
</feature>
<feature type="disulfide bond" description="Interchain" evidence="2">
    <location>
        <position position="109"/>
    </location>
</feature>
<feature type="disulfide bond" evidence="2">
    <location>
        <begin position="129"/>
        <end position="146"/>
    </location>
</feature>
<feature type="sequence conflict" description="In Ref. 2; AA sequence." evidence="8" ref="2">
    <original>Q</original>
    <variation>S</variation>
    <location>
        <position position="28"/>
    </location>
</feature>
<feature type="sequence conflict" description="In Ref. 2; AA sequence." evidence="8" ref="2">
    <original>L</original>
    <variation>Q</variation>
    <location>
        <position position="44"/>
    </location>
</feature>
<reference key="1">
    <citation type="journal article" date="2004" name="Arch. Biochem. Biophys.">
        <title>Cloning, characterization, and structural analysis of a C-type lectin from Bothrops insularis (BiL) venom.</title>
        <authorList>
            <person name="Guimaraes-Gomes V."/>
            <person name="Oliveira-Carvalho A.L."/>
            <person name="Junqueira-de-Azevedo I.L.M."/>
            <person name="Dutra D.L.S."/>
            <person name="Pujol-Luz M."/>
            <person name="Castro H.C."/>
            <person name="Ho P.L."/>
            <person name="Zingali R.B."/>
        </authorList>
    </citation>
    <scope>NUCLEOTIDE SEQUENCE [MRNA]</scope>
    <scope>PROTEIN SEQUENCE OF 24-39 AND 56-78</scope>
    <scope>MASS SPECTROMETRY</scope>
    <scope>FUNCTION</scope>
    <scope>SUBUNIT</scope>
    <scope>3D-STRUCTURE MODELING</scope>
    <scope>SUBCELLULAR LOCATION</scope>
    <source>
        <tissue>Venom</tissue>
        <tissue>Venom gland</tissue>
    </source>
</reference>
<reference key="2">
    <citation type="journal article" date="2006" name="Toxicon">
        <title>Purification and biological effects of C-type lectin isolated from Bothrops insularis venom.</title>
        <authorList>
            <person name="Braga M.D."/>
            <person name="Martins A.M."/>
            <person name="Amora D.N."/>
            <person name="de Menezes D.B."/>
            <person name="Toyama M.H."/>
            <person name="Toyama D.O."/>
            <person name="Marangoni S."/>
            <person name="Barbosa P.S."/>
            <person name="de Sousa Alves R."/>
            <person name="Fonteles M.C."/>
            <person name="Monteiro H.S."/>
        </authorList>
    </citation>
    <scope>PROTEIN SEQUENCE OF 24-58</scope>
    <scope>FUNCTION</scope>
    <scope>SUBCELLULAR LOCATION</scope>
    <source>
        <tissue>Venom</tissue>
    </source>
</reference>
<protein>
    <recommendedName>
        <fullName evidence="6">C-type lectin BiL</fullName>
        <shortName evidence="7">BiLec</shortName>
        <shortName evidence="6 7">CTL</shortName>
    </recommendedName>
</protein>
<dbReference type="EMBL" id="AY522720">
    <property type="protein sequence ID" value="AAS01426.1"/>
    <property type="molecule type" value="mRNA"/>
</dbReference>
<dbReference type="SMR" id="Q6QX33"/>
<dbReference type="GO" id="GO:0005576">
    <property type="term" value="C:extracellular region"/>
    <property type="evidence" value="ECO:0007669"/>
    <property type="project" value="UniProtKB-SubCell"/>
</dbReference>
<dbReference type="GO" id="GO:0030246">
    <property type="term" value="F:carbohydrate binding"/>
    <property type="evidence" value="ECO:0007669"/>
    <property type="project" value="UniProtKB-KW"/>
</dbReference>
<dbReference type="GO" id="GO:0046872">
    <property type="term" value="F:metal ion binding"/>
    <property type="evidence" value="ECO:0007669"/>
    <property type="project" value="UniProtKB-KW"/>
</dbReference>
<dbReference type="CDD" id="cd03594">
    <property type="entry name" value="CLECT_REG-1_like"/>
    <property type="match status" value="1"/>
</dbReference>
<dbReference type="FunFam" id="3.10.100.10:FF:000015">
    <property type="entry name" value="C-type lectin Cal"/>
    <property type="match status" value="1"/>
</dbReference>
<dbReference type="Gene3D" id="3.10.100.10">
    <property type="entry name" value="Mannose-Binding Protein A, subunit A"/>
    <property type="match status" value="1"/>
</dbReference>
<dbReference type="InterPro" id="IPR001304">
    <property type="entry name" value="C-type_lectin-like"/>
</dbReference>
<dbReference type="InterPro" id="IPR016186">
    <property type="entry name" value="C-type_lectin-like/link_sf"/>
</dbReference>
<dbReference type="InterPro" id="IPR050111">
    <property type="entry name" value="C-type_lectin/snaclec_domain"/>
</dbReference>
<dbReference type="InterPro" id="IPR018378">
    <property type="entry name" value="C-type_lectin_CS"/>
</dbReference>
<dbReference type="InterPro" id="IPR016187">
    <property type="entry name" value="CTDL_fold"/>
</dbReference>
<dbReference type="PANTHER" id="PTHR22803">
    <property type="entry name" value="MANNOSE, PHOSPHOLIPASE, LECTIN RECEPTOR RELATED"/>
    <property type="match status" value="1"/>
</dbReference>
<dbReference type="Pfam" id="PF00059">
    <property type="entry name" value="Lectin_C"/>
    <property type="match status" value="1"/>
</dbReference>
<dbReference type="PRINTS" id="PR01504">
    <property type="entry name" value="PNCREATITSAP"/>
</dbReference>
<dbReference type="SMART" id="SM00034">
    <property type="entry name" value="CLECT"/>
    <property type="match status" value="1"/>
</dbReference>
<dbReference type="SUPFAM" id="SSF56436">
    <property type="entry name" value="C-type lectin-like"/>
    <property type="match status" value="1"/>
</dbReference>
<dbReference type="PROSITE" id="PS00615">
    <property type="entry name" value="C_TYPE_LECTIN_1"/>
    <property type="match status" value="1"/>
</dbReference>
<dbReference type="PROSITE" id="PS50041">
    <property type="entry name" value="C_TYPE_LECTIN_2"/>
    <property type="match status" value="1"/>
</dbReference>
<comment type="function">
    <text evidence="4 5">Lectin with a hemagglutinating activity that is inhibited by galactose, lactose and EDTA (PubMed:15519291). Is calcium-dependent (PubMed:15519291). Shows effects on the renal function of isolated perfused rat kidneys by increasing both perfusion pressure (PP) and renal vascular resistance (RVR) (PubMed:16730365). In addition, the urinary flow and glomerular filtration rate (GFR) decreases significantly (PubMed:16730365). The changes observed may reflect direct injury to the glomerular and tubular renal cells, and the rise in permeability in the glomerular endothelial cells, may be the effect of interactions of C-type lectin with endothelial cells or due to release of other mediators by mesangial, tubular and endothelial cells (PubMed:16730365).</text>
</comment>
<comment type="subunit">
    <text evidence="4">Homodimer; disulfide-linked.</text>
</comment>
<comment type="subcellular location">
    <subcellularLocation>
        <location evidence="4">Secreted</location>
    </subcellularLocation>
</comment>
<comment type="tissue specificity">
    <text evidence="9">Expressed by the venom gland.</text>
</comment>
<comment type="mass spectrometry"/>
<comment type="similarity">
    <text evidence="8">Belongs to the true venom lectin family.</text>
</comment>
<proteinExistence type="evidence at protein level"/>
<keyword id="KW-0106">Calcium</keyword>
<keyword id="KW-0903">Direct protein sequencing</keyword>
<keyword id="KW-1015">Disulfide bond</keyword>
<keyword id="KW-0348">Hemagglutinin</keyword>
<keyword id="KW-0430">Lectin</keyword>
<keyword id="KW-0479">Metal-binding</keyword>
<keyword id="KW-0964">Secreted</keyword>
<keyword id="KW-0732">Signal</keyword>
<accession>Q6QX33</accession>
<sequence>MGRFIFVSFGLLVVFLSLSGAKGNNCPQDWLPMNGLCYKIFDELKAWKDAEMFCRKYKPGCHLASFHLYGESPEIAEYISDYHKGQSEVWIGLWDKKKDFSWEWTDRSCTDYLSWDKNQPDHYQNKEFCVELVSDTGYRLWNDQVCESKNAFLCQCKF</sequence>